<protein>
    <recommendedName>
        <fullName>Homeobox protein abdominal-A homolog</fullName>
    </recommendedName>
</protein>
<dbReference type="EMBL" id="DS231824">
    <property type="protein sequence ID" value="EDS27388.1"/>
    <property type="molecule type" value="Genomic_DNA"/>
</dbReference>
<dbReference type="RefSeq" id="XP_001842686.1">
    <property type="nucleotide sequence ID" value="XM_001842634.1"/>
</dbReference>
<dbReference type="SMR" id="B0W1V2"/>
<dbReference type="STRING" id="7176.B0W1V2"/>
<dbReference type="EnsemblMetazoa" id="CPIJ001016-RA">
    <property type="protein sequence ID" value="CPIJ001016-PA"/>
    <property type="gene ID" value="CPIJ001016"/>
</dbReference>
<dbReference type="KEGG" id="cqu:CpipJ_CPIJ001016"/>
<dbReference type="VEuPathDB" id="VectorBase:CPIJ001016"/>
<dbReference type="VEuPathDB" id="VectorBase:CQUJHB003948"/>
<dbReference type="eggNOG" id="KOG0489">
    <property type="taxonomic scope" value="Eukaryota"/>
</dbReference>
<dbReference type="HOGENOM" id="CLU_1278737_0_0_1"/>
<dbReference type="InParanoid" id="B0W1V2"/>
<dbReference type="OMA" id="HINFGRT"/>
<dbReference type="OrthoDB" id="6159439at2759"/>
<dbReference type="PhylomeDB" id="B0W1V2"/>
<dbReference type="Proteomes" id="UP000002320">
    <property type="component" value="Unassembled WGS sequence"/>
</dbReference>
<dbReference type="GO" id="GO:0005634">
    <property type="term" value="C:nucleus"/>
    <property type="evidence" value="ECO:0007669"/>
    <property type="project" value="UniProtKB-SubCell"/>
</dbReference>
<dbReference type="GO" id="GO:0003700">
    <property type="term" value="F:DNA-binding transcription factor activity"/>
    <property type="evidence" value="ECO:0000250"/>
    <property type="project" value="UniProtKB"/>
</dbReference>
<dbReference type="GO" id="GO:0000981">
    <property type="term" value="F:DNA-binding transcription factor activity, RNA polymerase II-specific"/>
    <property type="evidence" value="ECO:0007669"/>
    <property type="project" value="InterPro"/>
</dbReference>
<dbReference type="GO" id="GO:0000978">
    <property type="term" value="F:RNA polymerase II cis-regulatory region sequence-specific DNA binding"/>
    <property type="evidence" value="ECO:0007669"/>
    <property type="project" value="TreeGrafter"/>
</dbReference>
<dbReference type="GO" id="GO:0009952">
    <property type="term" value="P:anterior/posterior pattern specification"/>
    <property type="evidence" value="ECO:0000250"/>
    <property type="project" value="UniProtKB"/>
</dbReference>
<dbReference type="GO" id="GO:0000122">
    <property type="term" value="P:negative regulation of transcription by RNA polymerase II"/>
    <property type="evidence" value="ECO:0007669"/>
    <property type="project" value="TreeGrafter"/>
</dbReference>
<dbReference type="GO" id="GO:0006355">
    <property type="term" value="P:regulation of DNA-templated transcription"/>
    <property type="evidence" value="ECO:0000250"/>
    <property type="project" value="UniProtKB"/>
</dbReference>
<dbReference type="CDD" id="cd00086">
    <property type="entry name" value="homeodomain"/>
    <property type="match status" value="1"/>
</dbReference>
<dbReference type="FunFam" id="1.10.10.60:FF:000193">
    <property type="entry name" value="Ultrabithorax, isoform C"/>
    <property type="match status" value="1"/>
</dbReference>
<dbReference type="Gene3D" id="1.10.10.60">
    <property type="entry name" value="Homeodomain-like"/>
    <property type="match status" value="1"/>
</dbReference>
<dbReference type="InterPro" id="IPR022132">
    <property type="entry name" value="Abdominal-A"/>
</dbReference>
<dbReference type="InterPro" id="IPR050296">
    <property type="entry name" value="Antp_homeobox"/>
</dbReference>
<dbReference type="InterPro" id="IPR001356">
    <property type="entry name" value="HD"/>
</dbReference>
<dbReference type="InterPro" id="IPR020479">
    <property type="entry name" value="HD_metazoa"/>
</dbReference>
<dbReference type="InterPro" id="IPR017970">
    <property type="entry name" value="Homeobox_CS"/>
</dbReference>
<dbReference type="InterPro" id="IPR009057">
    <property type="entry name" value="Homeodomain-like_sf"/>
</dbReference>
<dbReference type="PANTHER" id="PTHR45659:SF4">
    <property type="entry name" value="HOMEOBOX PROTEIN ABDOMINAL-A"/>
    <property type="match status" value="1"/>
</dbReference>
<dbReference type="PANTHER" id="PTHR45659">
    <property type="entry name" value="HOMEOBOX PROTEIN HOX"/>
    <property type="match status" value="1"/>
</dbReference>
<dbReference type="Pfam" id="PF12407">
    <property type="entry name" value="Abdominal-A"/>
    <property type="match status" value="1"/>
</dbReference>
<dbReference type="Pfam" id="PF00046">
    <property type="entry name" value="Homeodomain"/>
    <property type="match status" value="1"/>
</dbReference>
<dbReference type="PRINTS" id="PR00024">
    <property type="entry name" value="HOMEOBOX"/>
</dbReference>
<dbReference type="SMART" id="SM00389">
    <property type="entry name" value="HOX"/>
    <property type="match status" value="1"/>
</dbReference>
<dbReference type="SUPFAM" id="SSF46689">
    <property type="entry name" value="Homeodomain-like"/>
    <property type="match status" value="1"/>
</dbReference>
<dbReference type="PROSITE" id="PS00027">
    <property type="entry name" value="HOMEOBOX_1"/>
    <property type="match status" value="1"/>
</dbReference>
<dbReference type="PROSITE" id="PS50071">
    <property type="entry name" value="HOMEOBOX_2"/>
    <property type="match status" value="1"/>
</dbReference>
<evidence type="ECO:0000250" key="1">
    <source>
        <dbReference type="UniProtKB" id="P29555"/>
    </source>
</evidence>
<evidence type="ECO:0000255" key="2"/>
<evidence type="ECO:0000255" key="3">
    <source>
        <dbReference type="PROSITE-ProRule" id="PRU00108"/>
    </source>
</evidence>
<evidence type="ECO:0000256" key="4">
    <source>
        <dbReference type="SAM" id="MobiDB-lite"/>
    </source>
</evidence>
<evidence type="ECO:0000305" key="5"/>
<evidence type="ECO:0000312" key="6">
    <source>
        <dbReference type="EMBL" id="EDS27388.1"/>
    </source>
</evidence>
<comment type="function">
    <text evidence="5">Sequence-specific transcription factor which is part of a developmental regulatory system that provides cells with specific positional identities on the anterior-posterior axis.</text>
</comment>
<comment type="subcellular location">
    <subcellularLocation>
        <location evidence="3">Nucleus</location>
    </subcellularLocation>
</comment>
<comment type="similarity">
    <text evidence="2">Belongs to the Antp homeobox family.</text>
</comment>
<sequence length="216" mass="24606">MCDIVRCRRSQLIRGHVLARLCHGIASPLLGRLRPRRPNGCPRRRGRQTYTRFQTLELEKEFHFNHYLTRRRRIEIAHALCLTERQIKIWFQNRRMKLKKELRAVKEINEQARREREEQDKMKNDSLKSAQQHHQSQKQQQQEHTVVGSQQTSGGGGGGSTSLGSHLHHPSIVAQNDLKLGLGSMGVGVGGNLSMMGGLDNKTNQDILKAVSNVHS</sequence>
<reference evidence="6" key="1">
    <citation type="submission" date="2007-03" db="EMBL/GenBank/DDBJ databases">
        <title>Annotation of Culex pipiens quinquefasciatus.</title>
        <authorList>
            <consortium name="The Broad Institute Genome Sequencing Platform"/>
            <person name="Atkinson P.W."/>
            <person name="Hemingway J."/>
            <person name="Christensen B.M."/>
            <person name="Higgs S."/>
            <person name="Kodira C.D."/>
            <person name="Hannick L.I."/>
            <person name="Megy K."/>
            <person name="O'Leary S.B."/>
            <person name="Pearson M."/>
            <person name="Haas B.J."/>
            <person name="Mauceli E."/>
            <person name="Wortman J.R."/>
            <person name="Lee N.H."/>
            <person name="Guigo R."/>
            <person name="Stanke M."/>
            <person name="Alvarado L."/>
            <person name="Amedeo P."/>
            <person name="Antoine C.H."/>
            <person name="Arensburger P."/>
            <person name="Bidwell S.L."/>
            <person name="Crawford M."/>
            <person name="Camaro F."/>
            <person name="Devon K."/>
            <person name="Engels R."/>
            <person name="Hammond M."/>
            <person name="Howarth C."/>
            <person name="Koehrsen M."/>
            <person name="Lawson D."/>
            <person name="Montgomery P."/>
            <person name="Nene V."/>
            <person name="Nusbaum C."/>
            <person name="Puiu D."/>
            <person name="Romero-Severson J."/>
            <person name="Severson D.W."/>
            <person name="Shumway M."/>
            <person name="Sisk P."/>
            <person name="Stolte C."/>
            <person name="Zeng Q."/>
            <person name="Eisenstadt E."/>
            <person name="Fraser-Liggett C.M."/>
            <person name="Strausberg R."/>
            <person name="Galagan J."/>
            <person name="Birren B."/>
            <person name="Collins F.H."/>
        </authorList>
    </citation>
    <scope>NUCLEOTIDE SEQUENCE [LARGE SCALE GENOMIC DNA]</scope>
    <source>
        <strain evidence="6">JHB</strain>
    </source>
</reference>
<gene>
    <name evidence="1" type="primary">abd-A</name>
    <name type="ORF">CPIJ001016</name>
</gene>
<proteinExistence type="inferred from homology"/>
<feature type="chain" id="PRO_0000343524" description="Homeobox protein abdominal-A homolog">
    <location>
        <begin position="1"/>
        <end position="216"/>
    </location>
</feature>
<feature type="DNA-binding region" description="Homeobox" evidence="3">
    <location>
        <begin position="43"/>
        <end position="102"/>
    </location>
</feature>
<feature type="region of interest" description="Disordered" evidence="4">
    <location>
        <begin position="112"/>
        <end position="167"/>
    </location>
</feature>
<feature type="compositionally biased region" description="Basic and acidic residues" evidence="4">
    <location>
        <begin position="112"/>
        <end position="126"/>
    </location>
</feature>
<feature type="compositionally biased region" description="Low complexity" evidence="4">
    <location>
        <begin position="128"/>
        <end position="152"/>
    </location>
</feature>
<organism>
    <name type="scientific">Culex quinquefasciatus</name>
    <name type="common">Southern house mosquito</name>
    <name type="synonym">Culex pungens</name>
    <dbReference type="NCBI Taxonomy" id="7176"/>
    <lineage>
        <taxon>Eukaryota</taxon>
        <taxon>Metazoa</taxon>
        <taxon>Ecdysozoa</taxon>
        <taxon>Arthropoda</taxon>
        <taxon>Hexapoda</taxon>
        <taxon>Insecta</taxon>
        <taxon>Pterygota</taxon>
        <taxon>Neoptera</taxon>
        <taxon>Endopterygota</taxon>
        <taxon>Diptera</taxon>
        <taxon>Nematocera</taxon>
        <taxon>Culicoidea</taxon>
        <taxon>Culicidae</taxon>
        <taxon>Culicinae</taxon>
        <taxon>Culicini</taxon>
        <taxon>Culex</taxon>
        <taxon>Culex</taxon>
    </lineage>
</organism>
<name>ABDA_CULQU</name>
<accession>B0W1V2</accession>
<keyword id="KW-0217">Developmental protein</keyword>
<keyword id="KW-0238">DNA-binding</keyword>
<keyword id="KW-0371">Homeobox</keyword>
<keyword id="KW-0539">Nucleus</keyword>
<keyword id="KW-1185">Reference proteome</keyword>